<comment type="function">
    <text evidence="1">Catalyzes the ATP-dependent phosphorylation of L-homoserine to L-homoserine phosphate.</text>
</comment>
<comment type="catalytic activity">
    <reaction evidence="1">
        <text>L-homoserine + ATP = O-phospho-L-homoserine + ADP + H(+)</text>
        <dbReference type="Rhea" id="RHEA:13985"/>
        <dbReference type="ChEBI" id="CHEBI:15378"/>
        <dbReference type="ChEBI" id="CHEBI:30616"/>
        <dbReference type="ChEBI" id="CHEBI:57476"/>
        <dbReference type="ChEBI" id="CHEBI:57590"/>
        <dbReference type="ChEBI" id="CHEBI:456216"/>
        <dbReference type="EC" id="2.7.1.39"/>
    </reaction>
</comment>
<comment type="pathway">
    <text evidence="1">Amino-acid biosynthesis; L-threonine biosynthesis; L-threonine from L-aspartate: step 4/5.</text>
</comment>
<comment type="subcellular location">
    <subcellularLocation>
        <location evidence="1">Cytoplasm</location>
    </subcellularLocation>
</comment>
<comment type="similarity">
    <text evidence="1">Belongs to the GHMP kinase family. Homoserine kinase subfamily.</text>
</comment>
<gene>
    <name evidence="1" type="primary">thrB</name>
    <name type="ordered locus">SERP0899</name>
</gene>
<dbReference type="EC" id="2.7.1.39" evidence="1"/>
<dbReference type="EMBL" id="CP000029">
    <property type="protein sequence ID" value="AAW54259.1"/>
    <property type="molecule type" value="Genomic_DNA"/>
</dbReference>
<dbReference type="RefSeq" id="WP_002456538.1">
    <property type="nucleotide sequence ID" value="NC_002976.3"/>
</dbReference>
<dbReference type="SMR" id="Q5HPL2"/>
<dbReference type="STRING" id="176279.SERP0899"/>
<dbReference type="GeneID" id="50018860"/>
<dbReference type="KEGG" id="ser:SERP0899"/>
<dbReference type="eggNOG" id="COG0083">
    <property type="taxonomic scope" value="Bacteria"/>
</dbReference>
<dbReference type="HOGENOM" id="CLU_041243_0_0_9"/>
<dbReference type="UniPathway" id="UPA00050">
    <property type="reaction ID" value="UER00064"/>
</dbReference>
<dbReference type="Proteomes" id="UP000000531">
    <property type="component" value="Chromosome"/>
</dbReference>
<dbReference type="GO" id="GO:0005737">
    <property type="term" value="C:cytoplasm"/>
    <property type="evidence" value="ECO:0007669"/>
    <property type="project" value="UniProtKB-SubCell"/>
</dbReference>
<dbReference type="GO" id="GO:0005524">
    <property type="term" value="F:ATP binding"/>
    <property type="evidence" value="ECO:0007669"/>
    <property type="project" value="UniProtKB-UniRule"/>
</dbReference>
<dbReference type="GO" id="GO:0004413">
    <property type="term" value="F:homoserine kinase activity"/>
    <property type="evidence" value="ECO:0007669"/>
    <property type="project" value="UniProtKB-UniRule"/>
</dbReference>
<dbReference type="GO" id="GO:0009088">
    <property type="term" value="P:threonine biosynthetic process"/>
    <property type="evidence" value="ECO:0007669"/>
    <property type="project" value="UniProtKB-UniRule"/>
</dbReference>
<dbReference type="Gene3D" id="3.30.230.10">
    <property type="match status" value="1"/>
</dbReference>
<dbReference type="Gene3D" id="3.30.70.890">
    <property type="entry name" value="GHMP kinase, C-terminal domain"/>
    <property type="match status" value="1"/>
</dbReference>
<dbReference type="HAMAP" id="MF_00384">
    <property type="entry name" value="Homoser_kinase"/>
    <property type="match status" value="1"/>
</dbReference>
<dbReference type="InterPro" id="IPR013750">
    <property type="entry name" value="GHMP_kinase_C_dom"/>
</dbReference>
<dbReference type="InterPro" id="IPR036554">
    <property type="entry name" value="GHMP_kinase_C_sf"/>
</dbReference>
<dbReference type="InterPro" id="IPR006204">
    <property type="entry name" value="GHMP_kinase_N_dom"/>
</dbReference>
<dbReference type="InterPro" id="IPR006203">
    <property type="entry name" value="GHMP_knse_ATP-bd_CS"/>
</dbReference>
<dbReference type="InterPro" id="IPR000870">
    <property type="entry name" value="Homoserine_kinase"/>
</dbReference>
<dbReference type="InterPro" id="IPR020568">
    <property type="entry name" value="Ribosomal_Su5_D2-typ_SF"/>
</dbReference>
<dbReference type="InterPro" id="IPR014721">
    <property type="entry name" value="Ribsml_uS5_D2-typ_fold_subgr"/>
</dbReference>
<dbReference type="NCBIfam" id="TIGR00191">
    <property type="entry name" value="thrB"/>
    <property type="match status" value="1"/>
</dbReference>
<dbReference type="PANTHER" id="PTHR20861:SF1">
    <property type="entry name" value="HOMOSERINE KINASE"/>
    <property type="match status" value="1"/>
</dbReference>
<dbReference type="PANTHER" id="PTHR20861">
    <property type="entry name" value="HOMOSERINE/4-DIPHOSPHOCYTIDYL-2-C-METHYL-D-ERYTHRITOL KINASE"/>
    <property type="match status" value="1"/>
</dbReference>
<dbReference type="Pfam" id="PF08544">
    <property type="entry name" value="GHMP_kinases_C"/>
    <property type="match status" value="1"/>
</dbReference>
<dbReference type="Pfam" id="PF00288">
    <property type="entry name" value="GHMP_kinases_N"/>
    <property type="match status" value="1"/>
</dbReference>
<dbReference type="PIRSF" id="PIRSF000676">
    <property type="entry name" value="Homoser_kin"/>
    <property type="match status" value="1"/>
</dbReference>
<dbReference type="PRINTS" id="PR00958">
    <property type="entry name" value="HOMSERKINASE"/>
</dbReference>
<dbReference type="SUPFAM" id="SSF55060">
    <property type="entry name" value="GHMP Kinase, C-terminal domain"/>
    <property type="match status" value="1"/>
</dbReference>
<dbReference type="SUPFAM" id="SSF54211">
    <property type="entry name" value="Ribosomal protein S5 domain 2-like"/>
    <property type="match status" value="1"/>
</dbReference>
<dbReference type="PROSITE" id="PS00627">
    <property type="entry name" value="GHMP_KINASES_ATP"/>
    <property type="match status" value="1"/>
</dbReference>
<accession>Q5HPL2</accession>
<keyword id="KW-0028">Amino-acid biosynthesis</keyword>
<keyword id="KW-0067">ATP-binding</keyword>
<keyword id="KW-0963">Cytoplasm</keyword>
<keyword id="KW-0418">Kinase</keyword>
<keyword id="KW-0547">Nucleotide-binding</keyword>
<keyword id="KW-1185">Reference proteome</keyword>
<keyword id="KW-0791">Threonine biosynthesis</keyword>
<keyword id="KW-0808">Transferase</keyword>
<proteinExistence type="inferred from homology"/>
<evidence type="ECO:0000255" key="1">
    <source>
        <dbReference type="HAMAP-Rule" id="MF_00384"/>
    </source>
</evidence>
<feature type="chain" id="PRO_0000156611" description="Homoserine kinase">
    <location>
        <begin position="1"/>
        <end position="306"/>
    </location>
</feature>
<feature type="binding site" evidence="1">
    <location>
        <begin position="90"/>
        <end position="100"/>
    </location>
    <ligand>
        <name>ATP</name>
        <dbReference type="ChEBI" id="CHEBI:30616"/>
    </ligand>
</feature>
<organism>
    <name type="scientific">Staphylococcus epidermidis (strain ATCC 35984 / DSM 28319 / BCRC 17069 / CCUG 31568 / BM 3577 / RP62A)</name>
    <dbReference type="NCBI Taxonomy" id="176279"/>
    <lineage>
        <taxon>Bacteria</taxon>
        <taxon>Bacillati</taxon>
        <taxon>Bacillota</taxon>
        <taxon>Bacilli</taxon>
        <taxon>Bacillales</taxon>
        <taxon>Staphylococcaceae</taxon>
        <taxon>Staphylococcus</taxon>
    </lineage>
</organism>
<protein>
    <recommendedName>
        <fullName evidence="1">Homoserine kinase</fullName>
        <shortName evidence="1">HK</shortName>
        <shortName evidence="1">HSK</shortName>
        <ecNumber evidence="1">2.7.1.39</ecNumber>
    </recommendedName>
</protein>
<reference key="1">
    <citation type="journal article" date="2005" name="J. Bacteriol.">
        <title>Insights on evolution of virulence and resistance from the complete genome analysis of an early methicillin-resistant Staphylococcus aureus strain and a biofilm-producing methicillin-resistant Staphylococcus epidermidis strain.</title>
        <authorList>
            <person name="Gill S.R."/>
            <person name="Fouts D.E."/>
            <person name="Archer G.L."/>
            <person name="Mongodin E.F."/>
            <person name="DeBoy R.T."/>
            <person name="Ravel J."/>
            <person name="Paulsen I.T."/>
            <person name="Kolonay J.F."/>
            <person name="Brinkac L.M."/>
            <person name="Beanan M.J."/>
            <person name="Dodson R.J."/>
            <person name="Daugherty S.C."/>
            <person name="Madupu R."/>
            <person name="Angiuoli S.V."/>
            <person name="Durkin A.S."/>
            <person name="Haft D.H."/>
            <person name="Vamathevan J.J."/>
            <person name="Khouri H."/>
            <person name="Utterback T.R."/>
            <person name="Lee C."/>
            <person name="Dimitrov G."/>
            <person name="Jiang L."/>
            <person name="Qin H."/>
            <person name="Weidman J."/>
            <person name="Tran K."/>
            <person name="Kang K.H."/>
            <person name="Hance I.R."/>
            <person name="Nelson K.E."/>
            <person name="Fraser C.M."/>
        </authorList>
    </citation>
    <scope>NUCLEOTIDE SEQUENCE [LARGE SCALE GENOMIC DNA]</scope>
    <source>
        <strain>ATCC 35984 / DSM 28319 / BCRC 17069 / CCUG 31568 / BM 3577 / RP62A</strain>
    </source>
</reference>
<name>KHSE_STAEQ</name>
<sequence>MEEVLKLKIPASTANLGVGFDSIGMALDKYLHMSIRKIERANWEFLYYSSELEGLPKDENNYIYQTALNVARKYNVTLPSLQIEMRSDIPLARGLGSSASALVGALFIANYFGNIQLSKYELLQLATEIEGHPDNVAPTIYGGLIAGFYNPITKITDVARIEVPHVDIILTIPPYELRTEDSRRVLPDTFSHKGAVQNSAISNTMICALIQHKYKLAGKMMEQDGFHEPYRQHLIPEFNQVRKLSRQHDAYATVISGAGPTILTLCPKEKSGKLVRTLREKINNCASELVTINEIGVKDEVVYLKS</sequence>